<organism>
    <name type="scientific">Shewanella amazonensis (strain ATCC BAA-1098 / SB2B)</name>
    <dbReference type="NCBI Taxonomy" id="326297"/>
    <lineage>
        <taxon>Bacteria</taxon>
        <taxon>Pseudomonadati</taxon>
        <taxon>Pseudomonadota</taxon>
        <taxon>Gammaproteobacteria</taxon>
        <taxon>Alteromonadales</taxon>
        <taxon>Shewanellaceae</taxon>
        <taxon>Shewanella</taxon>
    </lineage>
</organism>
<accession>A1S6X6</accession>
<gene>
    <name type="ordered locus">Sama_1927</name>
</gene>
<dbReference type="EMBL" id="CP000507">
    <property type="protein sequence ID" value="ABM00133.1"/>
    <property type="molecule type" value="Genomic_DNA"/>
</dbReference>
<dbReference type="RefSeq" id="WP_011760040.1">
    <property type="nucleotide sequence ID" value="NC_008700.1"/>
</dbReference>
<dbReference type="STRING" id="326297.Sama_1927"/>
<dbReference type="KEGG" id="saz:Sama_1927"/>
<dbReference type="eggNOG" id="COG2983">
    <property type="taxonomic scope" value="Bacteria"/>
</dbReference>
<dbReference type="HOGENOM" id="CLU_109769_0_1_6"/>
<dbReference type="OrthoDB" id="9786855at2"/>
<dbReference type="Proteomes" id="UP000009175">
    <property type="component" value="Chromosome"/>
</dbReference>
<dbReference type="HAMAP" id="MF_00676">
    <property type="entry name" value="UPF0260"/>
    <property type="match status" value="1"/>
</dbReference>
<dbReference type="InterPro" id="IPR005358">
    <property type="entry name" value="Puta_zinc/iron-chelating_dom"/>
</dbReference>
<dbReference type="InterPro" id="IPR008228">
    <property type="entry name" value="UCP006173"/>
</dbReference>
<dbReference type="NCBIfam" id="NF003500">
    <property type="entry name" value="PRK05170.1-4"/>
    <property type="match status" value="1"/>
</dbReference>
<dbReference type="NCBIfam" id="NF003501">
    <property type="entry name" value="PRK05170.1-5"/>
    <property type="match status" value="1"/>
</dbReference>
<dbReference type="NCBIfam" id="NF003507">
    <property type="entry name" value="PRK05170.2-5"/>
    <property type="match status" value="1"/>
</dbReference>
<dbReference type="PANTHER" id="PTHR37421">
    <property type="entry name" value="UPF0260 PROTEIN YCGN"/>
    <property type="match status" value="1"/>
</dbReference>
<dbReference type="PANTHER" id="PTHR37421:SF1">
    <property type="entry name" value="UPF0260 PROTEIN YCGN"/>
    <property type="match status" value="1"/>
</dbReference>
<dbReference type="Pfam" id="PF03692">
    <property type="entry name" value="CxxCxxCC"/>
    <property type="match status" value="1"/>
</dbReference>
<dbReference type="PIRSF" id="PIRSF006173">
    <property type="entry name" value="UCP006173"/>
    <property type="match status" value="1"/>
</dbReference>
<keyword id="KW-1185">Reference proteome</keyword>
<proteinExistence type="inferred from homology"/>
<protein>
    <recommendedName>
        <fullName evidence="1">UPF0260 protein Sama_1927</fullName>
    </recommendedName>
</protein>
<comment type="similarity">
    <text evidence="1">Belongs to the UPF0260 family.</text>
</comment>
<feature type="chain" id="PRO_1000044809" description="UPF0260 protein Sama_1927">
    <location>
        <begin position="1"/>
        <end position="146"/>
    </location>
</feature>
<reference key="1">
    <citation type="submission" date="2006-12" db="EMBL/GenBank/DDBJ databases">
        <title>Complete sequence of Shewanella amazonensis SB2B.</title>
        <authorList>
            <consortium name="US DOE Joint Genome Institute"/>
            <person name="Copeland A."/>
            <person name="Lucas S."/>
            <person name="Lapidus A."/>
            <person name="Barry K."/>
            <person name="Detter J.C."/>
            <person name="Glavina del Rio T."/>
            <person name="Hammon N."/>
            <person name="Israni S."/>
            <person name="Dalin E."/>
            <person name="Tice H."/>
            <person name="Pitluck S."/>
            <person name="Munk A.C."/>
            <person name="Brettin T."/>
            <person name="Bruce D."/>
            <person name="Han C."/>
            <person name="Tapia R."/>
            <person name="Gilna P."/>
            <person name="Schmutz J."/>
            <person name="Larimer F."/>
            <person name="Land M."/>
            <person name="Hauser L."/>
            <person name="Kyrpides N."/>
            <person name="Mikhailova N."/>
            <person name="Fredrickson J."/>
            <person name="Richardson P."/>
        </authorList>
    </citation>
    <scope>NUCLEOTIDE SEQUENCE [LARGE SCALE GENOMIC DNA]</scope>
    <source>
        <strain>ATCC BAA-1098 / SB2B</strain>
    </source>
</reference>
<evidence type="ECO:0000255" key="1">
    <source>
        <dbReference type="HAMAP-Rule" id="MF_00676"/>
    </source>
</evidence>
<sequence>MEFWKTKRLEELNPEEWESLCDGCGKCCLNKIIDDETDELYYTNAACKLLDRDACHCRHYSERFTFVPGCAAITPDNIASLTWLPDSCAYVRLFQGRDLPSWHPLVTGSKEAMHAAGMSVKGKAVCETKVRYLEDHIVLWPLKDVD</sequence>
<name>Y1927_SHEAM</name>